<accession>Q9W0P2</accession>
<accession>A9UNE7</accession>
<accession>Q8T9I8</accession>
<gene>
    <name evidence="8 13" type="primary">Rev1</name>
    <name evidence="13" type="ORF">CG12189</name>
</gene>
<sequence length="995" mass="112414">MTRDEDNGFSEWGGYFEAKKSKLEEQFAAASDPFRKSDLFQGISIFVNGRTDPSADELKRIMMVHGGTFHHYERSHTTYIIASVLPDVKVRNMNLSKFISAKWVVDCLEKKKIVDYKPYLLYTNQKTSQPMLIFGKPKDNGANESKSDVEPPKDKAEVEVDSTKDETQMELGGILKNLQQAVATSPEKEASASESKITNLSTTSNNSTTARTAADPNFLSEFYKNSRLHHIATLGAGFKQYVCRLRQKHGTQGFPKRETLKSLANSHHNCLERYVMHIDMDCFFVSVGLRTRPELRGLPIAVTHSKGGNAATDVPVHPQADRKAELELFAQRFEHHFHDGDKAEKVRSGFDKKMSLSEIASCSYEAREKGIRNGMFVGQALKLCPELKTIPYDFEGYKEVAFTLYDTVAQYTLNIEAVSCDEMFVELTDLAHELNVDVMAFVSHLRQEVYSKTGCPCSAGVAGNKLLARMATKEAKPNGQFLLDSSNDILAYMAPMSLDLLPGVGSSISHKLKQAGLNNCGDVQNTTLEKMEKVLGKKLGQNLFQNCRGIDDRPLAYEQIRKTVSAEMNFGIRFTNSVECEQFLCQLSEEVTKRLVEIRRKARSINLKIMVRAAEAPVETSKYMGHGVCDIINKSSLIKYATDDVNVITTVVLDLMKDADIPPDELRGLGIHLTRLEDANEVRKENNIKEMFGKMSEMRKDKPIPQGAVGDKSIGDDKVNKPLVFENKPKPREPRNVLSMLTAAAVSRKSVTEDRSQRGTSKPITRPLSLVPKLDEDVLAQLPEDIRLEVIANREEHLCIAEYDGYRSPQYPTLRSPPLLNPYVTTNVSPLKATDLKPSTSRAAVARLQKRKERKEQEHYIRSDQIVADYIDDLPDFVNPHILKLISHPVEMPELLMGDNYKDLLNDWVSREEVPKPNDVDLILKQVSRMIKNDQLDHVCDVMKYWCRIINMKRSSSCCWHVAYKHIEESIQNQMLTIEGYSLLFIEYIRCIKCS</sequence>
<comment type="function">
    <text evidence="1 7">Deoxycytidyl transferase involved in DNA repair (PubMed:22532806). Transfers a dCMP residue from dCTP to the 3'-end of a DNA primer in a template-dependent reaction. May assist in the first step in the bypass of abasic lesions by the insertion of a nucleotide opposite the lesion. Required for normal induction of mutations by physical and chemical agents (By similarity). During homologous recombination (HR) repair of DNA double-strand breaks (DSBs) regulates the extent of repair synthesis (PubMed:22532806). Possibly recruits the DNA polymerase zeta complex or another translesion polymerase to early DSB repair intermediates to initiate repair synthesis, while also blocking the access of more processive polymerases preventing them from acting during the initial stages of HR repair (PubMed:22532806).</text>
</comment>
<comment type="cofactor">
    <cofactor>
        <name>Mg(2+)</name>
        <dbReference type="ChEBI" id="CHEBI:18420"/>
    </cofactor>
    <text evidence="1">Binds 2 magnesium ions.</text>
</comment>
<comment type="subunit">
    <text evidence="6">Interacts (via C-terminus) with PolH/DNApol-eta (via C-terminal regions). Interacts (via C-terminus) with PolI.</text>
</comment>
<comment type="interaction">
    <interactant intactId="EBI-95229">
        <id>Q9W0P2</id>
    </interactant>
    <interactant intactId="EBI-115702">
        <id>Q9VNX1</id>
        <label>PolH</label>
    </interactant>
    <organismsDiffer>false</organismsDiffer>
    <experiments>2</experiments>
</comment>
<comment type="subcellular location">
    <subcellularLocation>
        <location evidence="2">Nucleus</location>
    </subcellularLocation>
</comment>
<comment type="disruption phenotype">
    <text evidence="7">Highly sensitive to ionizing radiation due to defects in homologous recombination (HR) repair. The percentage of full HR repair is normal but the length of the repair synthesis tracts is increased.</text>
</comment>
<comment type="similarity">
    <text evidence="9">Belongs to the DNA polymerase type-Y family.</text>
</comment>
<comment type="sequence caution" evidence="9">
    <conflict type="erroneous initiation">
        <sequence resource="EMBL-CDS" id="ABY21724"/>
    </conflict>
    <text>Extended N-terminus.</text>
</comment>
<reference evidence="12" key="1">
    <citation type="journal article" date="2001" name="J. Biol. Chem.">
        <title>Mutagenic and nonmutagenic bypass of DNA lesions by Drosophila DNA polymerases dpoleta and dpoliota.</title>
        <authorList>
            <person name="Ishikawa T."/>
            <person name="Uematsu N."/>
            <person name="Mizukoshi T."/>
            <person name="Iwai S."/>
            <person name="Iwasaki H."/>
            <person name="Masutani C."/>
            <person name="Hanaoka F."/>
            <person name="Ueda R."/>
            <person name="Ohmori H."/>
            <person name="Todo T."/>
        </authorList>
    </citation>
    <scope>NUCLEOTIDE SEQUENCE [MRNA]</scope>
</reference>
<reference evidence="14" key="2">
    <citation type="journal article" date="2000" name="Science">
        <title>The genome sequence of Drosophila melanogaster.</title>
        <authorList>
            <person name="Adams M.D."/>
            <person name="Celniker S.E."/>
            <person name="Holt R.A."/>
            <person name="Evans C.A."/>
            <person name="Gocayne J.D."/>
            <person name="Amanatides P.G."/>
            <person name="Scherer S.E."/>
            <person name="Li P.W."/>
            <person name="Hoskins R.A."/>
            <person name="Galle R.F."/>
            <person name="George R.A."/>
            <person name="Lewis S.E."/>
            <person name="Richards S."/>
            <person name="Ashburner M."/>
            <person name="Henderson S.N."/>
            <person name="Sutton G.G."/>
            <person name="Wortman J.R."/>
            <person name="Yandell M.D."/>
            <person name="Zhang Q."/>
            <person name="Chen L.X."/>
            <person name="Brandon R.C."/>
            <person name="Rogers Y.-H.C."/>
            <person name="Blazej R.G."/>
            <person name="Champe M."/>
            <person name="Pfeiffer B.D."/>
            <person name="Wan K.H."/>
            <person name="Doyle C."/>
            <person name="Baxter E.G."/>
            <person name="Helt G."/>
            <person name="Nelson C.R."/>
            <person name="Miklos G.L.G."/>
            <person name="Abril J.F."/>
            <person name="Agbayani A."/>
            <person name="An H.-J."/>
            <person name="Andrews-Pfannkoch C."/>
            <person name="Baldwin D."/>
            <person name="Ballew R.M."/>
            <person name="Basu A."/>
            <person name="Baxendale J."/>
            <person name="Bayraktaroglu L."/>
            <person name="Beasley E.M."/>
            <person name="Beeson K.Y."/>
            <person name="Benos P.V."/>
            <person name="Berman B.P."/>
            <person name="Bhandari D."/>
            <person name="Bolshakov S."/>
            <person name="Borkova D."/>
            <person name="Botchan M.R."/>
            <person name="Bouck J."/>
            <person name="Brokstein P."/>
            <person name="Brottier P."/>
            <person name="Burtis K.C."/>
            <person name="Busam D.A."/>
            <person name="Butler H."/>
            <person name="Cadieu E."/>
            <person name="Center A."/>
            <person name="Chandra I."/>
            <person name="Cherry J.M."/>
            <person name="Cawley S."/>
            <person name="Dahlke C."/>
            <person name="Davenport L.B."/>
            <person name="Davies P."/>
            <person name="de Pablos B."/>
            <person name="Delcher A."/>
            <person name="Deng Z."/>
            <person name="Mays A.D."/>
            <person name="Dew I."/>
            <person name="Dietz S.M."/>
            <person name="Dodson K."/>
            <person name="Doup L.E."/>
            <person name="Downes M."/>
            <person name="Dugan-Rocha S."/>
            <person name="Dunkov B.C."/>
            <person name="Dunn P."/>
            <person name="Durbin K.J."/>
            <person name="Evangelista C.C."/>
            <person name="Ferraz C."/>
            <person name="Ferriera S."/>
            <person name="Fleischmann W."/>
            <person name="Fosler C."/>
            <person name="Gabrielian A.E."/>
            <person name="Garg N.S."/>
            <person name="Gelbart W.M."/>
            <person name="Glasser K."/>
            <person name="Glodek A."/>
            <person name="Gong F."/>
            <person name="Gorrell J.H."/>
            <person name="Gu Z."/>
            <person name="Guan P."/>
            <person name="Harris M."/>
            <person name="Harris N.L."/>
            <person name="Harvey D.A."/>
            <person name="Heiman T.J."/>
            <person name="Hernandez J.R."/>
            <person name="Houck J."/>
            <person name="Hostin D."/>
            <person name="Houston K.A."/>
            <person name="Howland T.J."/>
            <person name="Wei M.-H."/>
            <person name="Ibegwam C."/>
            <person name="Jalali M."/>
            <person name="Kalush F."/>
            <person name="Karpen G.H."/>
            <person name="Ke Z."/>
            <person name="Kennison J.A."/>
            <person name="Ketchum K.A."/>
            <person name="Kimmel B.E."/>
            <person name="Kodira C.D."/>
            <person name="Kraft C.L."/>
            <person name="Kravitz S."/>
            <person name="Kulp D."/>
            <person name="Lai Z."/>
            <person name="Lasko P."/>
            <person name="Lei Y."/>
            <person name="Levitsky A.A."/>
            <person name="Li J.H."/>
            <person name="Li Z."/>
            <person name="Liang Y."/>
            <person name="Lin X."/>
            <person name="Liu X."/>
            <person name="Mattei B."/>
            <person name="McIntosh T.C."/>
            <person name="McLeod M.P."/>
            <person name="McPherson D."/>
            <person name="Merkulov G."/>
            <person name="Milshina N.V."/>
            <person name="Mobarry C."/>
            <person name="Morris J."/>
            <person name="Moshrefi A."/>
            <person name="Mount S.M."/>
            <person name="Moy M."/>
            <person name="Murphy B."/>
            <person name="Murphy L."/>
            <person name="Muzny D.M."/>
            <person name="Nelson D.L."/>
            <person name="Nelson D.R."/>
            <person name="Nelson K.A."/>
            <person name="Nixon K."/>
            <person name="Nusskern D.R."/>
            <person name="Pacleb J.M."/>
            <person name="Palazzolo M."/>
            <person name="Pittman G.S."/>
            <person name="Pan S."/>
            <person name="Pollard J."/>
            <person name="Puri V."/>
            <person name="Reese M.G."/>
            <person name="Reinert K."/>
            <person name="Remington K."/>
            <person name="Saunders R.D.C."/>
            <person name="Scheeler F."/>
            <person name="Shen H."/>
            <person name="Shue B.C."/>
            <person name="Siden-Kiamos I."/>
            <person name="Simpson M."/>
            <person name="Skupski M.P."/>
            <person name="Smith T.J."/>
            <person name="Spier E."/>
            <person name="Spradling A.C."/>
            <person name="Stapleton M."/>
            <person name="Strong R."/>
            <person name="Sun E."/>
            <person name="Svirskas R."/>
            <person name="Tector C."/>
            <person name="Turner R."/>
            <person name="Venter E."/>
            <person name="Wang A.H."/>
            <person name="Wang X."/>
            <person name="Wang Z.-Y."/>
            <person name="Wassarman D.A."/>
            <person name="Weinstock G.M."/>
            <person name="Weissenbach J."/>
            <person name="Williams S.M."/>
            <person name="Woodage T."/>
            <person name="Worley K.C."/>
            <person name="Wu D."/>
            <person name="Yang S."/>
            <person name="Yao Q.A."/>
            <person name="Ye J."/>
            <person name="Yeh R.-F."/>
            <person name="Zaveri J.S."/>
            <person name="Zhan M."/>
            <person name="Zhang G."/>
            <person name="Zhao Q."/>
            <person name="Zheng L."/>
            <person name="Zheng X.H."/>
            <person name="Zhong F.N."/>
            <person name="Zhong W."/>
            <person name="Zhou X."/>
            <person name="Zhu S.C."/>
            <person name="Zhu X."/>
            <person name="Smith H.O."/>
            <person name="Gibbs R.A."/>
            <person name="Myers E.W."/>
            <person name="Rubin G.M."/>
            <person name="Venter J.C."/>
        </authorList>
    </citation>
    <scope>NUCLEOTIDE SEQUENCE [LARGE SCALE GENOMIC DNA]</scope>
    <source>
        <strain>Berkeley</strain>
    </source>
</reference>
<reference evidence="14" key="3">
    <citation type="journal article" date="2002" name="Genome Biol.">
        <title>Annotation of the Drosophila melanogaster euchromatic genome: a systematic review.</title>
        <authorList>
            <person name="Misra S."/>
            <person name="Crosby M.A."/>
            <person name="Mungall C.J."/>
            <person name="Matthews B.B."/>
            <person name="Campbell K.S."/>
            <person name="Hradecky P."/>
            <person name="Huang Y."/>
            <person name="Kaminker J.S."/>
            <person name="Millburn G.H."/>
            <person name="Prochnik S.E."/>
            <person name="Smith C.D."/>
            <person name="Tupy J.L."/>
            <person name="Whitfield E.J."/>
            <person name="Bayraktaroglu L."/>
            <person name="Berman B.P."/>
            <person name="Bettencourt B.R."/>
            <person name="Celniker S.E."/>
            <person name="de Grey A.D.N.J."/>
            <person name="Drysdale R.A."/>
            <person name="Harris N.L."/>
            <person name="Richter J."/>
            <person name="Russo S."/>
            <person name="Schroeder A.J."/>
            <person name="Shu S.Q."/>
            <person name="Stapleton M."/>
            <person name="Yamada C."/>
            <person name="Ashburner M."/>
            <person name="Gelbart W.M."/>
            <person name="Rubin G.M."/>
            <person name="Lewis S.E."/>
        </authorList>
    </citation>
    <scope>GENOME REANNOTATION</scope>
    <source>
        <strain>Berkeley</strain>
    </source>
</reference>
<reference evidence="11" key="4">
    <citation type="submission" date="2007-12" db="EMBL/GenBank/DDBJ databases">
        <authorList>
            <person name="Stapleton M."/>
            <person name="Carlson J."/>
            <person name="Frise E."/>
            <person name="Kapadia B."/>
            <person name="Park S."/>
            <person name="Wan K."/>
            <person name="Yu C."/>
            <person name="Celniker S."/>
        </authorList>
    </citation>
    <scope>NUCLEOTIDE SEQUENCE [LARGE SCALE MRNA]</scope>
    <source>
        <strain evidence="11">Berkeley</strain>
        <tissue evidence="11">Head</tissue>
    </source>
</reference>
<reference evidence="10" key="5">
    <citation type="journal article" date="2002" name="Genome Biol.">
        <title>A Drosophila full-length cDNA resource.</title>
        <authorList>
            <person name="Stapleton M."/>
            <person name="Carlson J.W."/>
            <person name="Brokstein P."/>
            <person name="Yu C."/>
            <person name="Champe M."/>
            <person name="George R.A."/>
            <person name="Guarin H."/>
            <person name="Kronmiller B."/>
            <person name="Pacleb J.M."/>
            <person name="Park S."/>
            <person name="Wan K.H."/>
            <person name="Rubin G.M."/>
            <person name="Celniker S.E."/>
        </authorList>
    </citation>
    <scope>NUCLEOTIDE SEQUENCE [LARGE SCALE MRNA] OF 659-995</scope>
    <source>
        <strain>Berkeley</strain>
        <tissue>Ovary</tissue>
    </source>
</reference>
<reference evidence="9" key="6">
    <citation type="journal article" date="2008" name="DNA Repair">
        <title>Comparative analysis of in vivo interactions between Rev1 protein and other Y-family DNA polymerases in animals and yeasts.</title>
        <authorList>
            <person name="Kosarek J.N."/>
            <person name="Woodruff R.V."/>
            <person name="Rivera-Begeman A."/>
            <person name="Guo C."/>
            <person name="D'Souza S."/>
            <person name="Koonin E.V."/>
            <person name="Walker G.C."/>
            <person name="Friedberg E.C."/>
        </authorList>
    </citation>
    <scope>INTERACTION WITH POLH AND POLI</scope>
    <scope>REGION</scope>
</reference>
<reference evidence="9" key="7">
    <citation type="journal article" date="2012" name="PLoS Genet.">
        <title>Competition between replicative and translesion polymerases during homologous recombination repair in Drosophila.</title>
        <authorList>
            <person name="Kane D.P."/>
            <person name="Shusterman M."/>
            <person name="Rong Y."/>
            <person name="McVey M."/>
        </authorList>
    </citation>
    <scope>FUNCTION</scope>
    <scope>DISRUPTION PHENOTYPE</scope>
</reference>
<name>REV1_DROME</name>
<feature type="chain" id="PRO_0000448743" description="DNA repair protein Rev1">
    <location>
        <begin position="1"/>
        <end position="995"/>
    </location>
</feature>
<feature type="domain" description="BRCT" evidence="3">
    <location>
        <begin position="35"/>
        <end position="121"/>
    </location>
</feature>
<feature type="domain" description="UmuC" evidence="4">
    <location>
        <begin position="275"/>
        <end position="505"/>
    </location>
</feature>
<feature type="region of interest" description="Disordered" evidence="5">
    <location>
        <begin position="135"/>
        <end position="164"/>
    </location>
</feature>
<feature type="region of interest" description="Disordered" evidence="5">
    <location>
        <begin position="182"/>
        <end position="211"/>
    </location>
</feature>
<feature type="region of interest" description="Interaction with PolI" evidence="6">
    <location>
        <begin position="696"/>
        <end position="868"/>
    </location>
</feature>
<feature type="region of interest" description="Interaction with PolH/DNApol-eta" evidence="6">
    <location>
        <begin position="878"/>
        <end position="995"/>
    </location>
</feature>
<feature type="compositionally biased region" description="Basic and acidic residues" evidence="5">
    <location>
        <begin position="136"/>
        <end position="164"/>
    </location>
</feature>
<feature type="compositionally biased region" description="Low complexity" evidence="5">
    <location>
        <begin position="192"/>
        <end position="211"/>
    </location>
</feature>
<feature type="active site" evidence="4">
    <location>
        <position position="422"/>
    </location>
</feature>
<feature type="binding site" evidence="4">
    <location>
        <position position="279"/>
    </location>
    <ligand>
        <name>Mg(2+)</name>
        <dbReference type="ChEBI" id="CHEBI:18420"/>
    </ligand>
</feature>
<feature type="binding site" evidence="1">
    <location>
        <begin position="361"/>
        <end position="367"/>
    </location>
    <ligand>
        <name>dCTP</name>
        <dbReference type="ChEBI" id="CHEBI:61481"/>
    </ligand>
</feature>
<feature type="binding site" evidence="1">
    <location>
        <position position="373"/>
    </location>
    <ligand>
        <name>dCTP</name>
        <dbReference type="ChEBI" id="CHEBI:61481"/>
    </ligand>
</feature>
<feature type="binding site" evidence="1">
    <location>
        <position position="421"/>
    </location>
    <ligand>
        <name>dCTP</name>
        <dbReference type="ChEBI" id="CHEBI:61481"/>
    </ligand>
</feature>
<feature type="binding site" evidence="4">
    <location>
        <position position="421"/>
    </location>
    <ligand>
        <name>Mg(2+)</name>
        <dbReference type="ChEBI" id="CHEBI:18420"/>
    </ligand>
</feature>
<feature type="site" description="Substrate discrimination" evidence="4">
    <location>
        <position position="284"/>
    </location>
</feature>
<feature type="sequence conflict" description="In Ref. 5; AAL39416." evidence="9" ref="5">
    <original>E</original>
    <variation>Q</variation>
    <location>
        <position position="690"/>
    </location>
</feature>
<protein>
    <recommendedName>
        <fullName evidence="2">DNA repair protein Rev1</fullName>
        <ecNumber evidence="2">2.7.7.-</ecNumber>
    </recommendedName>
    <alternativeName>
        <fullName evidence="8">Reversionless protein 1</fullName>
    </alternativeName>
</protein>
<proteinExistence type="evidence at protein level"/>
<keyword id="KW-0227">DNA damage</keyword>
<keyword id="KW-0234">DNA repair</keyword>
<keyword id="KW-0237">DNA synthesis</keyword>
<keyword id="KW-0238">DNA-binding</keyword>
<keyword id="KW-0460">Magnesium</keyword>
<keyword id="KW-0479">Metal-binding</keyword>
<keyword id="KW-0548">Nucleotidyltransferase</keyword>
<keyword id="KW-0539">Nucleus</keyword>
<keyword id="KW-1185">Reference proteome</keyword>
<keyword id="KW-0808">Transferase</keyword>
<organism evidence="14">
    <name type="scientific">Drosophila melanogaster</name>
    <name type="common">Fruit fly</name>
    <dbReference type="NCBI Taxonomy" id="7227"/>
    <lineage>
        <taxon>Eukaryota</taxon>
        <taxon>Metazoa</taxon>
        <taxon>Ecdysozoa</taxon>
        <taxon>Arthropoda</taxon>
        <taxon>Hexapoda</taxon>
        <taxon>Insecta</taxon>
        <taxon>Pterygota</taxon>
        <taxon>Neoptera</taxon>
        <taxon>Endopterygota</taxon>
        <taxon>Diptera</taxon>
        <taxon>Brachycera</taxon>
        <taxon>Muscomorpha</taxon>
        <taxon>Ephydroidea</taxon>
        <taxon>Drosophilidae</taxon>
        <taxon>Drosophila</taxon>
        <taxon>Sophophora</taxon>
    </lineage>
</organism>
<evidence type="ECO:0000250" key="1">
    <source>
        <dbReference type="UniProtKB" id="P12689"/>
    </source>
</evidence>
<evidence type="ECO:0000255" key="2">
    <source>
        <dbReference type="PIRNR" id="PIRNR036573"/>
    </source>
</evidence>
<evidence type="ECO:0000255" key="3">
    <source>
        <dbReference type="PROSITE-ProRule" id="PRU00033"/>
    </source>
</evidence>
<evidence type="ECO:0000255" key="4">
    <source>
        <dbReference type="PROSITE-ProRule" id="PRU00216"/>
    </source>
</evidence>
<evidence type="ECO:0000256" key="5">
    <source>
        <dbReference type="SAM" id="MobiDB-lite"/>
    </source>
</evidence>
<evidence type="ECO:0000269" key="6">
    <source>
    </source>
</evidence>
<evidence type="ECO:0000269" key="7">
    <source>
    </source>
</evidence>
<evidence type="ECO:0000303" key="8">
    <source>
    </source>
</evidence>
<evidence type="ECO:0000305" key="9"/>
<evidence type="ECO:0000312" key="10">
    <source>
        <dbReference type="EMBL" id="AAL39416.1"/>
    </source>
</evidence>
<evidence type="ECO:0000312" key="11">
    <source>
        <dbReference type="EMBL" id="ABY21724.1"/>
    </source>
</evidence>
<evidence type="ECO:0000312" key="12">
    <source>
        <dbReference type="EMBL" id="BAB15801.1"/>
    </source>
</evidence>
<evidence type="ECO:0000312" key="13">
    <source>
        <dbReference type="FlyBase" id="FBgn0035150"/>
    </source>
</evidence>
<evidence type="ECO:0000312" key="14">
    <source>
        <dbReference type="Proteomes" id="UP000000803"/>
    </source>
</evidence>
<dbReference type="EC" id="2.7.7.-" evidence="2"/>
<dbReference type="EMBL" id="AB049435">
    <property type="protein sequence ID" value="BAB15801.1"/>
    <property type="molecule type" value="mRNA"/>
</dbReference>
<dbReference type="EMBL" id="AE014296">
    <property type="protein sequence ID" value="AAF47401.1"/>
    <property type="molecule type" value="Genomic_DNA"/>
</dbReference>
<dbReference type="EMBL" id="BT031311">
    <property type="protein sequence ID" value="ABY21724.1"/>
    <property type="status" value="ALT_INIT"/>
    <property type="molecule type" value="mRNA"/>
</dbReference>
<dbReference type="EMBL" id="AY069271">
    <property type="protein sequence ID" value="AAL39416.1"/>
    <property type="molecule type" value="mRNA"/>
</dbReference>
<dbReference type="RefSeq" id="NP_612047.1">
    <property type="nucleotide sequence ID" value="NM_138203.3"/>
</dbReference>
<dbReference type="SMR" id="Q9W0P2"/>
<dbReference type="FunCoup" id="Q9W0P2">
    <property type="interactions" value="1273"/>
</dbReference>
<dbReference type="IntAct" id="Q9W0P2">
    <property type="interactions" value="11"/>
</dbReference>
<dbReference type="STRING" id="7227.FBpp0072456"/>
<dbReference type="PaxDb" id="7227-FBpp0072456"/>
<dbReference type="EnsemblMetazoa" id="FBtr0072557">
    <property type="protein sequence ID" value="FBpp0072456"/>
    <property type="gene ID" value="FBgn0035150"/>
</dbReference>
<dbReference type="GeneID" id="38079"/>
<dbReference type="KEGG" id="dme:Dmel_CG12189"/>
<dbReference type="UCSC" id="CG12189-RA">
    <property type="organism name" value="d. melanogaster"/>
</dbReference>
<dbReference type="AGR" id="FB:FBgn0035150"/>
<dbReference type="CTD" id="51455"/>
<dbReference type="FlyBase" id="FBgn0035150">
    <property type="gene designation" value="Rev1"/>
</dbReference>
<dbReference type="VEuPathDB" id="VectorBase:FBgn0035150"/>
<dbReference type="eggNOG" id="KOG2093">
    <property type="taxonomic scope" value="Eukaryota"/>
</dbReference>
<dbReference type="GeneTree" id="ENSGT00940000156374"/>
<dbReference type="HOGENOM" id="CLU_003901_0_2_1"/>
<dbReference type="InParanoid" id="Q9W0P2"/>
<dbReference type="OMA" id="EELHKCF"/>
<dbReference type="OrthoDB" id="427711at2759"/>
<dbReference type="PhylomeDB" id="Q9W0P2"/>
<dbReference type="Reactome" id="R-DME-110312">
    <property type="pathway name" value="Translesion synthesis by REV1"/>
</dbReference>
<dbReference type="Reactome" id="R-DME-5655862">
    <property type="pathway name" value="Translesion synthesis by POLK"/>
</dbReference>
<dbReference type="Reactome" id="R-DME-5656121">
    <property type="pathway name" value="Translesion synthesis by POLI"/>
</dbReference>
<dbReference type="SignaLink" id="Q9W0P2"/>
<dbReference type="BioGRID-ORCS" id="38079">
    <property type="hits" value="1 hit in 1 CRISPR screen"/>
</dbReference>
<dbReference type="GenomeRNAi" id="38079"/>
<dbReference type="PRO" id="PR:Q9W0P2"/>
<dbReference type="Proteomes" id="UP000000803">
    <property type="component" value="Chromosome 3L"/>
</dbReference>
<dbReference type="Bgee" id="FBgn0035150">
    <property type="expression patterns" value="Expressed in egg chamber and 38 other cell types or tissues"/>
</dbReference>
<dbReference type="GO" id="GO:0005634">
    <property type="term" value="C:nucleus"/>
    <property type="evidence" value="ECO:0007669"/>
    <property type="project" value="UniProtKB-SubCell"/>
</dbReference>
<dbReference type="GO" id="GO:0005657">
    <property type="term" value="C:replication fork"/>
    <property type="evidence" value="ECO:0000250"/>
    <property type="project" value="FlyBase"/>
</dbReference>
<dbReference type="GO" id="GO:0003684">
    <property type="term" value="F:damaged DNA binding"/>
    <property type="evidence" value="ECO:0007669"/>
    <property type="project" value="InterPro"/>
</dbReference>
<dbReference type="GO" id="GO:0017125">
    <property type="term" value="F:deoxycytidyl transferase activity"/>
    <property type="evidence" value="ECO:0000250"/>
    <property type="project" value="FlyBase"/>
</dbReference>
<dbReference type="GO" id="GO:0003887">
    <property type="term" value="F:DNA-directed DNA polymerase activity"/>
    <property type="evidence" value="ECO:0000318"/>
    <property type="project" value="GO_Central"/>
</dbReference>
<dbReference type="GO" id="GO:0046872">
    <property type="term" value="F:metal ion binding"/>
    <property type="evidence" value="ECO:0007669"/>
    <property type="project" value="UniProtKB-KW"/>
</dbReference>
<dbReference type="GO" id="GO:0043150">
    <property type="term" value="P:DNA synthesis involved in double-strand break repair via homologous recombination"/>
    <property type="evidence" value="ECO:0000315"/>
    <property type="project" value="FlyBase"/>
</dbReference>
<dbReference type="GO" id="GO:0006302">
    <property type="term" value="P:double-strand break repair"/>
    <property type="evidence" value="ECO:0000315"/>
    <property type="project" value="FlyBase"/>
</dbReference>
<dbReference type="GO" id="GO:0070987">
    <property type="term" value="P:error-free translesion synthesis"/>
    <property type="evidence" value="ECO:0000318"/>
    <property type="project" value="GO_Central"/>
</dbReference>
<dbReference type="GO" id="GO:0042276">
    <property type="term" value="P:error-prone translesion synthesis"/>
    <property type="evidence" value="ECO:0000318"/>
    <property type="project" value="GO_Central"/>
</dbReference>
<dbReference type="GO" id="GO:0010569">
    <property type="term" value="P:regulation of double-strand break repair via homologous recombination"/>
    <property type="evidence" value="ECO:0000315"/>
    <property type="project" value="FlyBase"/>
</dbReference>
<dbReference type="GO" id="GO:0019985">
    <property type="term" value="P:translesion synthesis"/>
    <property type="evidence" value="ECO:0000250"/>
    <property type="project" value="FlyBase"/>
</dbReference>
<dbReference type="CDD" id="cd17719">
    <property type="entry name" value="BRCT_Rev1"/>
    <property type="match status" value="1"/>
</dbReference>
<dbReference type="CDD" id="cd01701">
    <property type="entry name" value="PolY_Rev1"/>
    <property type="match status" value="1"/>
</dbReference>
<dbReference type="CDD" id="cd12145">
    <property type="entry name" value="Rev1_C"/>
    <property type="match status" value="1"/>
</dbReference>
<dbReference type="FunFam" id="3.30.1490.100:FF:000001">
    <property type="entry name" value="DNA repair protein REV1"/>
    <property type="match status" value="1"/>
</dbReference>
<dbReference type="FunFam" id="3.40.1170.60:FF:000018">
    <property type="entry name" value="DNA repair protein REV1"/>
    <property type="match status" value="1"/>
</dbReference>
<dbReference type="FunFam" id="3.40.50.10190:FF:000011">
    <property type="entry name" value="DNA repair protein REV1"/>
    <property type="match status" value="1"/>
</dbReference>
<dbReference type="Gene3D" id="3.30.70.270">
    <property type="match status" value="1"/>
</dbReference>
<dbReference type="Gene3D" id="3.40.1170.60">
    <property type="match status" value="1"/>
</dbReference>
<dbReference type="Gene3D" id="6.10.250.1490">
    <property type="match status" value="1"/>
</dbReference>
<dbReference type="Gene3D" id="1.10.150.20">
    <property type="entry name" value="5' to 3' exonuclease, C-terminal subdomain"/>
    <property type="match status" value="1"/>
</dbReference>
<dbReference type="Gene3D" id="3.40.50.10190">
    <property type="entry name" value="BRCT domain"/>
    <property type="match status" value="1"/>
</dbReference>
<dbReference type="Gene3D" id="3.30.1490.100">
    <property type="entry name" value="DNA polymerase, Y-family, little finger domain"/>
    <property type="match status" value="1"/>
</dbReference>
<dbReference type="Gene3D" id="1.20.58.1280">
    <property type="entry name" value="DNA repair protein Rev1, C-terminal domain"/>
    <property type="match status" value="1"/>
</dbReference>
<dbReference type="InterPro" id="IPR001357">
    <property type="entry name" value="BRCT_dom"/>
</dbReference>
<dbReference type="InterPro" id="IPR036420">
    <property type="entry name" value="BRCT_dom_sf"/>
</dbReference>
<dbReference type="InterPro" id="IPR043502">
    <property type="entry name" value="DNA/RNA_pol_sf"/>
</dbReference>
<dbReference type="InterPro" id="IPR036775">
    <property type="entry name" value="DNA_pol_Y-fam_lit_finger_sf"/>
</dbReference>
<dbReference type="InterPro" id="IPR017961">
    <property type="entry name" value="DNA_pol_Y-fam_little_finger"/>
</dbReference>
<dbReference type="InterPro" id="IPR053848">
    <property type="entry name" value="IMS_HHH_1"/>
</dbReference>
<dbReference type="InterPro" id="IPR012112">
    <property type="entry name" value="REV1"/>
</dbReference>
<dbReference type="InterPro" id="IPR031991">
    <property type="entry name" value="Rev1_C"/>
</dbReference>
<dbReference type="InterPro" id="IPR038401">
    <property type="entry name" value="Rev1_C_sf"/>
</dbReference>
<dbReference type="InterPro" id="IPR043128">
    <property type="entry name" value="Rev_trsase/Diguanyl_cyclase"/>
</dbReference>
<dbReference type="InterPro" id="IPR001126">
    <property type="entry name" value="UmuC"/>
</dbReference>
<dbReference type="PANTHER" id="PTHR45990">
    <property type="entry name" value="DNA REPAIR PROTEIN REV1"/>
    <property type="match status" value="1"/>
</dbReference>
<dbReference type="PANTHER" id="PTHR45990:SF1">
    <property type="entry name" value="DNA REPAIR PROTEIN REV1"/>
    <property type="match status" value="1"/>
</dbReference>
<dbReference type="Pfam" id="PF16589">
    <property type="entry name" value="BRCT_2"/>
    <property type="match status" value="1"/>
</dbReference>
<dbReference type="Pfam" id="PF00817">
    <property type="entry name" value="IMS"/>
    <property type="match status" value="1"/>
</dbReference>
<dbReference type="Pfam" id="PF11799">
    <property type="entry name" value="IMS_C"/>
    <property type="match status" value="1"/>
</dbReference>
<dbReference type="Pfam" id="PF21999">
    <property type="entry name" value="IMS_HHH_1"/>
    <property type="match status" value="1"/>
</dbReference>
<dbReference type="Pfam" id="PF16727">
    <property type="entry name" value="REV1_C"/>
    <property type="match status" value="1"/>
</dbReference>
<dbReference type="PIRSF" id="PIRSF036573">
    <property type="entry name" value="REV1"/>
    <property type="match status" value="1"/>
</dbReference>
<dbReference type="SMART" id="SM00292">
    <property type="entry name" value="BRCT"/>
    <property type="match status" value="1"/>
</dbReference>
<dbReference type="SUPFAM" id="SSF52113">
    <property type="entry name" value="BRCT domain"/>
    <property type="match status" value="1"/>
</dbReference>
<dbReference type="SUPFAM" id="SSF56672">
    <property type="entry name" value="DNA/RNA polymerases"/>
    <property type="match status" value="1"/>
</dbReference>
<dbReference type="SUPFAM" id="SSF100879">
    <property type="entry name" value="Lesion bypass DNA polymerase (Y-family), little finger domain"/>
    <property type="match status" value="1"/>
</dbReference>
<dbReference type="PROSITE" id="PS50172">
    <property type="entry name" value="BRCT"/>
    <property type="match status" value="1"/>
</dbReference>
<dbReference type="PROSITE" id="PS50173">
    <property type="entry name" value="UMUC"/>
    <property type="match status" value="1"/>
</dbReference>